<organism>
    <name type="scientific">Mycobacterium tuberculosis (strain ATCC 25618 / H37Rv)</name>
    <dbReference type="NCBI Taxonomy" id="83332"/>
    <lineage>
        <taxon>Bacteria</taxon>
        <taxon>Bacillati</taxon>
        <taxon>Actinomycetota</taxon>
        <taxon>Actinomycetes</taxon>
        <taxon>Mycobacteriales</taxon>
        <taxon>Mycobacteriaceae</taxon>
        <taxon>Mycobacterium</taxon>
        <taxon>Mycobacterium tuberculosis complex</taxon>
    </lineage>
</organism>
<comment type="function">
    <text evidence="1 3">DNA-dependent RNA polymerase catalyzes the transcription of DNA into RNA using the four ribonucleoside triphosphates as substrates.</text>
</comment>
<comment type="catalytic activity">
    <reaction evidence="1">
        <text>RNA(n) + a ribonucleoside 5'-triphosphate = RNA(n+1) + diphosphate</text>
        <dbReference type="Rhea" id="RHEA:21248"/>
        <dbReference type="Rhea" id="RHEA-COMP:14527"/>
        <dbReference type="Rhea" id="RHEA-COMP:17342"/>
        <dbReference type="ChEBI" id="CHEBI:33019"/>
        <dbReference type="ChEBI" id="CHEBI:61557"/>
        <dbReference type="ChEBI" id="CHEBI:140395"/>
        <dbReference type="EC" id="2.7.7.6"/>
    </reaction>
</comment>
<comment type="cofactor">
    <cofactor evidence="1">
        <name>Mg(2+)</name>
        <dbReference type="ChEBI" id="CHEBI:18420"/>
    </cofactor>
    <text evidence="1">Binds 1 Mg(2+) ion per subunit.</text>
</comment>
<comment type="cofactor">
    <cofactor evidence="1">
        <name>Zn(2+)</name>
        <dbReference type="ChEBI" id="CHEBI:29105"/>
    </cofactor>
    <text evidence="1">Binds 2 Zn(2+) ions per subunit.</text>
</comment>
<comment type="subunit">
    <text evidence="1 3">The RNAP catalytic core consists of 2 alpha, 1 beta, 1 beta' and 1 omega subunit. When a sigma factor is associated with the core the holoenzyme is formed, which can initiate transcription.</text>
</comment>
<comment type="induction">
    <text evidence="2">6-fold repressed by starvation.</text>
</comment>
<comment type="similarity">
    <text evidence="1">Belongs to the RNA polymerase beta' chain family.</text>
</comment>
<name>RPOC_MYCTU</name>
<proteinExistence type="evidence at protein level"/>
<accession>P9WGY7</accession>
<accession>L0T4I2</accession>
<accession>O06771</accession>
<accession>P0A674</accession>
<accession>P47769</accession>
<evidence type="ECO:0000255" key="1">
    <source>
        <dbReference type="HAMAP-Rule" id="MF_01322"/>
    </source>
</evidence>
<evidence type="ECO:0000269" key="2">
    <source>
    </source>
</evidence>
<evidence type="ECO:0000269" key="3">
    <source>
    </source>
</evidence>
<evidence type="ECO:0007829" key="4">
    <source>
        <dbReference type="PDB" id="5UH7"/>
    </source>
</evidence>
<evidence type="ECO:0007829" key="5">
    <source>
        <dbReference type="PDB" id="5ZX2"/>
    </source>
</evidence>
<evidence type="ECO:0007829" key="6">
    <source>
        <dbReference type="PDB" id="5ZX3"/>
    </source>
</evidence>
<evidence type="ECO:0007829" key="7">
    <source>
        <dbReference type="PDB" id="6BZO"/>
    </source>
</evidence>
<evidence type="ECO:0007829" key="8">
    <source>
        <dbReference type="PDB" id="6DVC"/>
    </source>
</evidence>
<evidence type="ECO:0007829" key="9">
    <source>
        <dbReference type="PDB" id="6JCX"/>
    </source>
</evidence>
<evidence type="ECO:0007829" key="10">
    <source>
        <dbReference type="PDB" id="6JCY"/>
    </source>
</evidence>
<evidence type="ECO:0007829" key="11">
    <source>
        <dbReference type="PDB" id="6KOO"/>
    </source>
</evidence>
<evidence type="ECO:0007829" key="12">
    <source>
        <dbReference type="PDB" id="7KIF"/>
    </source>
</evidence>
<evidence type="ECO:0007829" key="13">
    <source>
        <dbReference type="PDB" id="7KIM"/>
    </source>
</evidence>
<evidence type="ECO:0007829" key="14">
    <source>
        <dbReference type="PDB" id="7KIN"/>
    </source>
</evidence>
<evidence type="ECO:0007829" key="15">
    <source>
        <dbReference type="PDB" id="8E82"/>
    </source>
</evidence>
<evidence type="ECO:0007829" key="16">
    <source>
        <dbReference type="PDB" id="8E95"/>
    </source>
</evidence>
<evidence type="ECO:0007829" key="17">
    <source>
        <dbReference type="PDB" id="8EHQ"/>
    </source>
</evidence>
<evidence type="ECO:0007829" key="18">
    <source>
        <dbReference type="PDB" id="8EOE"/>
    </source>
</evidence>
<evidence type="ECO:0007829" key="19">
    <source>
        <dbReference type="PDB" id="8EOS"/>
    </source>
</evidence>
<dbReference type="EC" id="2.7.7.6" evidence="1"/>
<dbReference type="EMBL" id="AL123456">
    <property type="protein sequence ID" value="CCP43411.1"/>
    <property type="molecule type" value="Genomic_DNA"/>
</dbReference>
<dbReference type="EMBL" id="L27989">
    <property type="protein sequence ID" value="AAA21417.1"/>
    <property type="molecule type" value="Genomic_DNA"/>
</dbReference>
<dbReference type="PIR" id="G70535">
    <property type="entry name" value="G70535"/>
</dbReference>
<dbReference type="RefSeq" id="NP_215182.1">
    <property type="nucleotide sequence ID" value="NC_000962.3"/>
</dbReference>
<dbReference type="RefSeq" id="WP_003403413.1">
    <property type="nucleotide sequence ID" value="NZ_NVQJ01000007.1"/>
</dbReference>
<dbReference type="PDB" id="5UH5">
    <property type="method" value="X-ray"/>
    <property type="resolution" value="3.75 A"/>
    <property type="chains" value="D=1-1316"/>
</dbReference>
<dbReference type="PDB" id="5UH6">
    <property type="method" value="X-ray"/>
    <property type="resolution" value="3.84 A"/>
    <property type="chains" value="D=1-1316"/>
</dbReference>
<dbReference type="PDB" id="5UH7">
    <property type="method" value="X-ray"/>
    <property type="resolution" value="2.20 A"/>
    <property type="chains" value="A/B=124-271"/>
</dbReference>
<dbReference type="PDB" id="5UH8">
    <property type="method" value="X-ray"/>
    <property type="resolution" value="4.18 A"/>
    <property type="chains" value="D=1-1316"/>
</dbReference>
<dbReference type="PDB" id="5UH9">
    <property type="method" value="X-ray"/>
    <property type="resolution" value="4.40 A"/>
    <property type="chains" value="D=1-1316"/>
</dbReference>
<dbReference type="PDB" id="5UHA">
    <property type="method" value="X-ray"/>
    <property type="resolution" value="3.91 A"/>
    <property type="chains" value="D=1-1316"/>
</dbReference>
<dbReference type="PDB" id="5UHB">
    <property type="method" value="X-ray"/>
    <property type="resolution" value="4.29 A"/>
    <property type="chains" value="D=1-1316"/>
</dbReference>
<dbReference type="PDB" id="5UHC">
    <property type="method" value="X-ray"/>
    <property type="resolution" value="3.80 A"/>
    <property type="chains" value="D=1-1316"/>
</dbReference>
<dbReference type="PDB" id="5UHD">
    <property type="method" value="X-ray"/>
    <property type="resolution" value="4.01 A"/>
    <property type="chains" value="D=1-1316"/>
</dbReference>
<dbReference type="PDB" id="5UHE">
    <property type="method" value="X-ray"/>
    <property type="resolution" value="4.04 A"/>
    <property type="chains" value="D=1-1316"/>
</dbReference>
<dbReference type="PDB" id="5UHF">
    <property type="method" value="X-ray"/>
    <property type="resolution" value="4.34 A"/>
    <property type="chains" value="D=1-1316"/>
</dbReference>
<dbReference type="PDB" id="5UHG">
    <property type="method" value="X-ray"/>
    <property type="resolution" value="3.97 A"/>
    <property type="chains" value="D=1-1316"/>
</dbReference>
<dbReference type="PDB" id="5ZX2">
    <property type="method" value="X-ray"/>
    <property type="resolution" value="2.80 A"/>
    <property type="chains" value="D=2-1316"/>
</dbReference>
<dbReference type="PDB" id="5ZX3">
    <property type="method" value="X-ray"/>
    <property type="resolution" value="2.75 A"/>
    <property type="chains" value="D=2-1316"/>
</dbReference>
<dbReference type="PDB" id="6BZO">
    <property type="method" value="EM"/>
    <property type="resolution" value="3.38 A"/>
    <property type="chains" value="D=1-1316"/>
</dbReference>
<dbReference type="PDB" id="6C04">
    <property type="method" value="EM"/>
    <property type="resolution" value="3.27 A"/>
    <property type="chains" value="D=1-1316"/>
</dbReference>
<dbReference type="PDB" id="6C05">
    <property type="method" value="EM"/>
    <property type="resolution" value="5.15 A"/>
    <property type="chains" value="D=1-1316"/>
</dbReference>
<dbReference type="PDB" id="6C06">
    <property type="method" value="EM"/>
    <property type="resolution" value="5.15 A"/>
    <property type="chains" value="D=1-1316"/>
</dbReference>
<dbReference type="PDB" id="6DV9">
    <property type="method" value="X-ray"/>
    <property type="resolution" value="3.80 A"/>
    <property type="chains" value="D=1-1316"/>
</dbReference>
<dbReference type="PDB" id="6DVB">
    <property type="method" value="X-ray"/>
    <property type="resolution" value="3.80 A"/>
    <property type="chains" value="D=1-1316"/>
</dbReference>
<dbReference type="PDB" id="6DVC">
    <property type="method" value="X-ray"/>
    <property type="resolution" value="3.30 A"/>
    <property type="chains" value="D=1-1316"/>
</dbReference>
<dbReference type="PDB" id="6DVD">
    <property type="method" value="X-ray"/>
    <property type="resolution" value="3.90 A"/>
    <property type="chains" value="D=1-1316"/>
</dbReference>
<dbReference type="PDB" id="6DVE">
    <property type="method" value="X-ray"/>
    <property type="resolution" value="3.81 A"/>
    <property type="chains" value="D=1-1316"/>
</dbReference>
<dbReference type="PDB" id="6EDT">
    <property type="method" value="EM"/>
    <property type="chains" value="D=1-1316"/>
</dbReference>
<dbReference type="PDB" id="6EE8">
    <property type="method" value="EM"/>
    <property type="resolution" value="3.92 A"/>
    <property type="chains" value="D=1-1316"/>
</dbReference>
<dbReference type="PDB" id="6EEC">
    <property type="method" value="EM"/>
    <property type="resolution" value="3.55 A"/>
    <property type="chains" value="D=1-1316"/>
</dbReference>
<dbReference type="PDB" id="6FBV">
    <property type="method" value="EM"/>
    <property type="resolution" value="3.50 A"/>
    <property type="chains" value="D=1-1316"/>
</dbReference>
<dbReference type="PDB" id="6JCX">
    <property type="method" value="X-ray"/>
    <property type="resolution" value="2.90 A"/>
    <property type="chains" value="D=2-1316"/>
</dbReference>
<dbReference type="PDB" id="6JCY">
    <property type="method" value="X-ray"/>
    <property type="resolution" value="3.11 A"/>
    <property type="chains" value="D=2-1316"/>
</dbReference>
<dbReference type="PDB" id="6KON">
    <property type="method" value="X-ray"/>
    <property type="resolution" value="3.00 A"/>
    <property type="chains" value="D=2-1316"/>
</dbReference>
<dbReference type="PDB" id="6KOO">
    <property type="method" value="X-ray"/>
    <property type="resolution" value="2.80 A"/>
    <property type="chains" value="D=2-1316"/>
</dbReference>
<dbReference type="PDB" id="6KOP">
    <property type="method" value="X-ray"/>
    <property type="resolution" value="3.30 A"/>
    <property type="chains" value="D=2-1316"/>
</dbReference>
<dbReference type="PDB" id="6KOQ">
    <property type="method" value="X-ray"/>
    <property type="resolution" value="3.35 A"/>
    <property type="chains" value="D=2-1316"/>
</dbReference>
<dbReference type="PDB" id="6M7J">
    <property type="method" value="EM"/>
    <property type="resolution" value="4.40 A"/>
    <property type="chains" value="D=1-1316"/>
</dbReference>
<dbReference type="PDB" id="6TYE">
    <property type="method" value="X-ray"/>
    <property type="resolution" value="3.79 A"/>
    <property type="chains" value="D=1-1316"/>
</dbReference>
<dbReference type="PDB" id="6TYF">
    <property type="method" value="X-ray"/>
    <property type="resolution" value="3.80 A"/>
    <property type="chains" value="D=1-1316"/>
</dbReference>
<dbReference type="PDB" id="6TYG">
    <property type="method" value="X-ray"/>
    <property type="resolution" value="3.50 A"/>
    <property type="chains" value="D=1-1316"/>
</dbReference>
<dbReference type="PDB" id="6VVX">
    <property type="method" value="EM"/>
    <property type="resolution" value="3.39 A"/>
    <property type="chains" value="D=1-1316"/>
</dbReference>
<dbReference type="PDB" id="6VVY">
    <property type="method" value="EM"/>
    <property type="resolution" value="3.42 A"/>
    <property type="chains" value="D=1-1316"/>
</dbReference>
<dbReference type="PDB" id="6VVZ">
    <property type="method" value="EM"/>
    <property type="resolution" value="3.72 A"/>
    <property type="chains" value="D=1-1316"/>
</dbReference>
<dbReference type="PDB" id="6VW0">
    <property type="method" value="EM"/>
    <property type="resolution" value="3.59 A"/>
    <property type="chains" value="D=1-1316"/>
</dbReference>
<dbReference type="PDB" id="7KIF">
    <property type="method" value="EM"/>
    <property type="resolution" value="2.94 A"/>
    <property type="chains" value="D=1-1316"/>
</dbReference>
<dbReference type="PDB" id="7KIM">
    <property type="method" value="EM"/>
    <property type="resolution" value="3.38 A"/>
    <property type="chains" value="D=1-1316"/>
</dbReference>
<dbReference type="PDB" id="7KIN">
    <property type="method" value="EM"/>
    <property type="resolution" value="2.74 A"/>
    <property type="chains" value="D=1-1316"/>
</dbReference>
<dbReference type="PDB" id="7PP4">
    <property type="method" value="EM"/>
    <property type="resolution" value="3.84 A"/>
    <property type="chains" value="d=1-1316"/>
</dbReference>
<dbReference type="PDB" id="7Q4U">
    <property type="method" value="EM"/>
    <property type="resolution" value="4.39 A"/>
    <property type="chains" value="CA/D/IA/J/OA/P/UA/W=4-1316"/>
</dbReference>
<dbReference type="PDB" id="7Q59">
    <property type="method" value="EM"/>
    <property type="resolution" value="4.36 A"/>
    <property type="chains" value="D/d=4-1316"/>
</dbReference>
<dbReference type="PDB" id="7RWI">
    <property type="method" value="X-ray"/>
    <property type="resolution" value="3.70 A"/>
    <property type="chains" value="D=1-1316"/>
</dbReference>
<dbReference type="PDB" id="7U22">
    <property type="method" value="X-ray"/>
    <property type="resolution" value="3.87 A"/>
    <property type="chains" value="D=1-1316"/>
</dbReference>
<dbReference type="PDB" id="7Z8Q">
    <property type="method" value="EM"/>
    <property type="resolution" value="4.08 A"/>
    <property type="chains" value="d=4-1316"/>
</dbReference>
<dbReference type="PDB" id="7ZF2">
    <property type="method" value="EM"/>
    <property type="resolution" value="3.86 A"/>
    <property type="chains" value="D=4-1316"/>
</dbReference>
<dbReference type="PDB" id="8E74">
    <property type="method" value="EM"/>
    <property type="resolution" value="2.94 A"/>
    <property type="chains" value="D=1-1316"/>
</dbReference>
<dbReference type="PDB" id="8E79">
    <property type="method" value="EM"/>
    <property type="resolution" value="3.71 A"/>
    <property type="chains" value="D=1-1316"/>
</dbReference>
<dbReference type="PDB" id="8E82">
    <property type="method" value="EM"/>
    <property type="resolution" value="3.03 A"/>
    <property type="chains" value="D=1-1316"/>
</dbReference>
<dbReference type="PDB" id="8E8M">
    <property type="method" value="EM"/>
    <property type="resolution" value="3.13 A"/>
    <property type="chains" value="D=1-1316"/>
</dbReference>
<dbReference type="PDB" id="8E95">
    <property type="method" value="EM"/>
    <property type="resolution" value="2.90 A"/>
    <property type="chains" value="D=1-1316"/>
</dbReference>
<dbReference type="PDB" id="8EHQ">
    <property type="method" value="EM"/>
    <property type="resolution" value="3.00 A"/>
    <property type="chains" value="D=1-1316"/>
</dbReference>
<dbReference type="PDB" id="8EJ3">
    <property type="method" value="EM"/>
    <property type="resolution" value="3.13 A"/>
    <property type="chains" value="D=1-1316"/>
</dbReference>
<dbReference type="PDB" id="8EOE">
    <property type="method" value="EM"/>
    <property type="resolution" value="3.20 A"/>
    <property type="chains" value="D=1-1316"/>
</dbReference>
<dbReference type="PDB" id="8EOF">
    <property type="method" value="EM"/>
    <property type="resolution" value="3.30 A"/>
    <property type="chains" value="D=1-1316"/>
</dbReference>
<dbReference type="PDB" id="8EOS">
    <property type="method" value="EM"/>
    <property type="resolution" value="3.10 A"/>
    <property type="chains" value="D=1-1316"/>
</dbReference>
<dbReference type="PDB" id="8EOT">
    <property type="method" value="EM"/>
    <property type="resolution" value="3.30 A"/>
    <property type="chains" value="D=1-1316"/>
</dbReference>
<dbReference type="PDB" id="8EXY">
    <property type="method" value="EM"/>
    <property type="resolution" value="3.20 A"/>
    <property type="chains" value="D=1-1316"/>
</dbReference>
<dbReference type="PDB" id="8HIH">
    <property type="method" value="EM"/>
    <property type="resolution" value="3.66 A"/>
    <property type="chains" value="D=1-1316"/>
</dbReference>
<dbReference type="PDBsum" id="5UH5"/>
<dbReference type="PDBsum" id="5UH6"/>
<dbReference type="PDBsum" id="5UH7"/>
<dbReference type="PDBsum" id="5UH8"/>
<dbReference type="PDBsum" id="5UH9"/>
<dbReference type="PDBsum" id="5UHA"/>
<dbReference type="PDBsum" id="5UHB"/>
<dbReference type="PDBsum" id="5UHC"/>
<dbReference type="PDBsum" id="5UHD"/>
<dbReference type="PDBsum" id="5UHE"/>
<dbReference type="PDBsum" id="5UHF"/>
<dbReference type="PDBsum" id="5UHG"/>
<dbReference type="PDBsum" id="5ZX2"/>
<dbReference type="PDBsum" id="5ZX3"/>
<dbReference type="PDBsum" id="6BZO"/>
<dbReference type="PDBsum" id="6C04"/>
<dbReference type="PDBsum" id="6C05"/>
<dbReference type="PDBsum" id="6C06"/>
<dbReference type="PDBsum" id="6DV9"/>
<dbReference type="PDBsum" id="6DVB"/>
<dbReference type="PDBsum" id="6DVC"/>
<dbReference type="PDBsum" id="6DVD"/>
<dbReference type="PDBsum" id="6DVE"/>
<dbReference type="PDBsum" id="6EDT"/>
<dbReference type="PDBsum" id="6EE8"/>
<dbReference type="PDBsum" id="6EEC"/>
<dbReference type="PDBsum" id="6FBV"/>
<dbReference type="PDBsum" id="6JCX"/>
<dbReference type="PDBsum" id="6JCY"/>
<dbReference type="PDBsum" id="6KON"/>
<dbReference type="PDBsum" id="6KOO"/>
<dbReference type="PDBsum" id="6KOP"/>
<dbReference type="PDBsum" id="6KOQ"/>
<dbReference type="PDBsum" id="6M7J"/>
<dbReference type="PDBsum" id="6TYE"/>
<dbReference type="PDBsum" id="6TYF"/>
<dbReference type="PDBsum" id="6TYG"/>
<dbReference type="PDBsum" id="6VVX"/>
<dbReference type="PDBsum" id="6VVY"/>
<dbReference type="PDBsum" id="6VVZ"/>
<dbReference type="PDBsum" id="6VW0"/>
<dbReference type="PDBsum" id="7KIF"/>
<dbReference type="PDBsum" id="7KIM"/>
<dbReference type="PDBsum" id="7KIN"/>
<dbReference type="PDBsum" id="7PP4"/>
<dbReference type="PDBsum" id="7Q4U"/>
<dbReference type="PDBsum" id="7Q59"/>
<dbReference type="PDBsum" id="7RWI"/>
<dbReference type="PDBsum" id="7U22"/>
<dbReference type="PDBsum" id="7Z8Q"/>
<dbReference type="PDBsum" id="7ZF2"/>
<dbReference type="PDBsum" id="8E74"/>
<dbReference type="PDBsum" id="8E79"/>
<dbReference type="PDBsum" id="8E82"/>
<dbReference type="PDBsum" id="8E8M"/>
<dbReference type="PDBsum" id="8E95"/>
<dbReference type="PDBsum" id="8EHQ"/>
<dbReference type="PDBsum" id="8EJ3"/>
<dbReference type="PDBsum" id="8EOE"/>
<dbReference type="PDBsum" id="8EOF"/>
<dbReference type="PDBsum" id="8EOS"/>
<dbReference type="PDBsum" id="8EOT"/>
<dbReference type="PDBsum" id="8EXY"/>
<dbReference type="PDBsum" id="8HIH"/>
<dbReference type="EMDB" id="EMD-13579"/>
<dbReference type="EMDB" id="EMD-13817"/>
<dbReference type="EMDB" id="EMD-13829"/>
<dbReference type="EMDB" id="EMD-14560"/>
<dbReference type="EMDB" id="EMD-14696"/>
<dbReference type="EMDB" id="EMD-14697"/>
<dbReference type="EMDB" id="EMD-14974"/>
<dbReference type="EMDB" id="EMD-28149"/>
<dbReference type="EMDB" id="EMD-28174"/>
<dbReference type="EMDB" id="EMD-28373"/>
<dbReference type="EMDB" id="EMD-28374"/>
<dbReference type="EMDB" id="EMD-28466"/>
<dbReference type="EMDB" id="EMD-28467"/>
<dbReference type="EMDB" id="EMD-28665"/>
<dbReference type="EMDB" id="EMD-34816"/>
<dbReference type="EMDB" id="EMD-4230"/>
<dbReference type="EMDB" id="EMD-61492"/>
<dbReference type="EMDB" id="EMD-62293"/>
<dbReference type="EMDB" id="EMD-62294"/>
<dbReference type="EMDB" id="EMD-62295"/>
<dbReference type="SASBDB" id="P9WGY7"/>
<dbReference type="SMR" id="P9WGY7"/>
<dbReference type="FunCoup" id="P9WGY7">
    <property type="interactions" value="424"/>
</dbReference>
<dbReference type="IntAct" id="P9WGY7">
    <property type="interactions" value="3"/>
</dbReference>
<dbReference type="STRING" id="83332.Rv0668"/>
<dbReference type="DrugBank" id="DB12466">
    <property type="generic name" value="Favipiravir"/>
</dbReference>
<dbReference type="DrugBank" id="DB11753">
    <property type="generic name" value="Rifamycin"/>
</dbReference>
<dbReference type="DrugBank" id="DB01201">
    <property type="generic name" value="Rifapentine"/>
</dbReference>
<dbReference type="DrugBank" id="DB06656">
    <property type="generic name" value="TAS-106"/>
</dbReference>
<dbReference type="PaxDb" id="83332-Rv0668"/>
<dbReference type="GeneID" id="888177"/>
<dbReference type="KEGG" id="mtu:Rv0668"/>
<dbReference type="KEGG" id="mtv:RVBD_0668"/>
<dbReference type="TubercuList" id="Rv0668"/>
<dbReference type="eggNOG" id="COG0086">
    <property type="taxonomic scope" value="Bacteria"/>
</dbReference>
<dbReference type="InParanoid" id="P9WGY7"/>
<dbReference type="OrthoDB" id="9815296at2"/>
<dbReference type="PhylomeDB" id="P9WGY7"/>
<dbReference type="BRENDA" id="2.7.7.6">
    <property type="organism ID" value="3445"/>
</dbReference>
<dbReference type="Reactome" id="R-HSA-9639775">
    <property type="pathway name" value="Antimicrobial action and antimicrobial resistance in Mtb"/>
</dbReference>
<dbReference type="Proteomes" id="UP000001584">
    <property type="component" value="Chromosome"/>
</dbReference>
<dbReference type="GO" id="GO:0005829">
    <property type="term" value="C:cytosol"/>
    <property type="evidence" value="ECO:0000304"/>
    <property type="project" value="Reactome"/>
</dbReference>
<dbReference type="GO" id="GO:0000428">
    <property type="term" value="C:DNA-directed RNA polymerase complex"/>
    <property type="evidence" value="ECO:0007669"/>
    <property type="project" value="UniProtKB-KW"/>
</dbReference>
<dbReference type="GO" id="GO:0009274">
    <property type="term" value="C:peptidoglycan-based cell wall"/>
    <property type="evidence" value="ECO:0007005"/>
    <property type="project" value="MTBBASE"/>
</dbReference>
<dbReference type="GO" id="GO:0005886">
    <property type="term" value="C:plasma membrane"/>
    <property type="evidence" value="ECO:0007005"/>
    <property type="project" value="MTBBASE"/>
</dbReference>
<dbReference type="GO" id="GO:0003677">
    <property type="term" value="F:DNA binding"/>
    <property type="evidence" value="ECO:0007669"/>
    <property type="project" value="UniProtKB-UniRule"/>
</dbReference>
<dbReference type="GO" id="GO:0003899">
    <property type="term" value="F:DNA-directed RNA polymerase activity"/>
    <property type="evidence" value="ECO:0007669"/>
    <property type="project" value="UniProtKB-UniRule"/>
</dbReference>
<dbReference type="GO" id="GO:0000287">
    <property type="term" value="F:magnesium ion binding"/>
    <property type="evidence" value="ECO:0007669"/>
    <property type="project" value="UniProtKB-UniRule"/>
</dbReference>
<dbReference type="GO" id="GO:0008270">
    <property type="term" value="F:zinc ion binding"/>
    <property type="evidence" value="ECO:0007669"/>
    <property type="project" value="UniProtKB-UniRule"/>
</dbReference>
<dbReference type="GO" id="GO:0006351">
    <property type="term" value="P:DNA-templated transcription"/>
    <property type="evidence" value="ECO:0007669"/>
    <property type="project" value="UniProtKB-UniRule"/>
</dbReference>
<dbReference type="CDD" id="cd02655">
    <property type="entry name" value="RNAP_beta'_C"/>
    <property type="match status" value="1"/>
</dbReference>
<dbReference type="CDD" id="cd01609">
    <property type="entry name" value="RNAP_beta'_N"/>
    <property type="match status" value="1"/>
</dbReference>
<dbReference type="FunFam" id="1.10.132.30:FF:000003">
    <property type="entry name" value="DNA-directed RNA polymerase subunit beta"/>
    <property type="match status" value="1"/>
</dbReference>
<dbReference type="FunFam" id="1.10.150.390:FF:000002">
    <property type="entry name" value="DNA-directed RNA polymerase subunit beta"/>
    <property type="match status" value="1"/>
</dbReference>
<dbReference type="FunFam" id="1.10.274.100:FF:000009">
    <property type="entry name" value="DNA-directed RNA polymerase subunit beta"/>
    <property type="match status" value="1"/>
</dbReference>
<dbReference type="FunFam" id="1.10.40.90:FF:000001">
    <property type="entry name" value="DNA-directed RNA polymerase subunit beta"/>
    <property type="match status" value="1"/>
</dbReference>
<dbReference type="FunFam" id="4.10.860.120:FF:000001">
    <property type="entry name" value="DNA-directed RNA polymerase subunit beta"/>
    <property type="match status" value="1"/>
</dbReference>
<dbReference type="Gene3D" id="1.10.132.30">
    <property type="match status" value="1"/>
</dbReference>
<dbReference type="Gene3D" id="1.10.150.390">
    <property type="match status" value="1"/>
</dbReference>
<dbReference type="Gene3D" id="1.10.1790.20">
    <property type="match status" value="1"/>
</dbReference>
<dbReference type="Gene3D" id="1.10.40.90">
    <property type="match status" value="1"/>
</dbReference>
<dbReference type="Gene3D" id="2.40.40.20">
    <property type="match status" value="1"/>
</dbReference>
<dbReference type="Gene3D" id="2.40.50.100">
    <property type="match status" value="1"/>
</dbReference>
<dbReference type="Gene3D" id="4.10.860.120">
    <property type="entry name" value="RNA polymerase II, clamp domain"/>
    <property type="match status" value="1"/>
</dbReference>
<dbReference type="Gene3D" id="1.10.274.100">
    <property type="entry name" value="RNA polymerase Rpb1, domain 3"/>
    <property type="match status" value="1"/>
</dbReference>
<dbReference type="HAMAP" id="MF_01322">
    <property type="entry name" value="RNApol_bact_RpoC"/>
    <property type="match status" value="1"/>
</dbReference>
<dbReference type="InterPro" id="IPR045867">
    <property type="entry name" value="DNA-dir_RpoC_beta_prime"/>
</dbReference>
<dbReference type="InterPro" id="IPR012754">
    <property type="entry name" value="DNA-dir_RpoC_beta_prime_bact"/>
</dbReference>
<dbReference type="InterPro" id="IPR000722">
    <property type="entry name" value="RNA_pol_asu"/>
</dbReference>
<dbReference type="InterPro" id="IPR006592">
    <property type="entry name" value="RNA_pol_N"/>
</dbReference>
<dbReference type="InterPro" id="IPR007080">
    <property type="entry name" value="RNA_pol_Rpb1_1"/>
</dbReference>
<dbReference type="InterPro" id="IPR007066">
    <property type="entry name" value="RNA_pol_Rpb1_3"/>
</dbReference>
<dbReference type="InterPro" id="IPR042102">
    <property type="entry name" value="RNA_pol_Rpb1_3_sf"/>
</dbReference>
<dbReference type="InterPro" id="IPR007083">
    <property type="entry name" value="RNA_pol_Rpb1_4"/>
</dbReference>
<dbReference type="InterPro" id="IPR007081">
    <property type="entry name" value="RNA_pol_Rpb1_5"/>
</dbReference>
<dbReference type="InterPro" id="IPR044893">
    <property type="entry name" value="RNA_pol_Rpb1_clamp_domain"/>
</dbReference>
<dbReference type="InterPro" id="IPR038120">
    <property type="entry name" value="Rpb1_funnel_sf"/>
</dbReference>
<dbReference type="NCBIfam" id="NF011498">
    <property type="entry name" value="PRK14906.1"/>
    <property type="match status" value="1"/>
</dbReference>
<dbReference type="NCBIfam" id="TIGR02386">
    <property type="entry name" value="rpoC_TIGR"/>
    <property type="match status" value="1"/>
</dbReference>
<dbReference type="PANTHER" id="PTHR19376">
    <property type="entry name" value="DNA-DIRECTED RNA POLYMERASE"/>
    <property type="match status" value="1"/>
</dbReference>
<dbReference type="PANTHER" id="PTHR19376:SF54">
    <property type="entry name" value="DNA-DIRECTED RNA POLYMERASE SUBUNIT BETA"/>
    <property type="match status" value="1"/>
</dbReference>
<dbReference type="Pfam" id="PF04997">
    <property type="entry name" value="RNA_pol_Rpb1_1"/>
    <property type="match status" value="1"/>
</dbReference>
<dbReference type="Pfam" id="PF00623">
    <property type="entry name" value="RNA_pol_Rpb1_2"/>
    <property type="match status" value="1"/>
</dbReference>
<dbReference type="Pfam" id="PF04983">
    <property type="entry name" value="RNA_pol_Rpb1_3"/>
    <property type="match status" value="1"/>
</dbReference>
<dbReference type="Pfam" id="PF05000">
    <property type="entry name" value="RNA_pol_Rpb1_4"/>
    <property type="match status" value="1"/>
</dbReference>
<dbReference type="Pfam" id="PF04998">
    <property type="entry name" value="RNA_pol_Rpb1_5"/>
    <property type="match status" value="1"/>
</dbReference>
<dbReference type="SMART" id="SM00663">
    <property type="entry name" value="RPOLA_N"/>
    <property type="match status" value="1"/>
</dbReference>
<dbReference type="SUPFAM" id="SSF64484">
    <property type="entry name" value="beta and beta-prime subunits of DNA dependent RNA-polymerase"/>
    <property type="match status" value="1"/>
</dbReference>
<feature type="chain" id="PRO_0000067765" description="DNA-directed RNA polymerase subunit beta'">
    <location>
        <begin position="1"/>
        <end position="1316"/>
    </location>
</feature>
<feature type="binding site" evidence="1">
    <location>
        <position position="60"/>
    </location>
    <ligand>
        <name>Zn(2+)</name>
        <dbReference type="ChEBI" id="CHEBI:29105"/>
        <label>1</label>
    </ligand>
</feature>
<feature type="binding site" evidence="1">
    <location>
        <position position="62"/>
    </location>
    <ligand>
        <name>Zn(2+)</name>
        <dbReference type="ChEBI" id="CHEBI:29105"/>
        <label>1</label>
    </ligand>
</feature>
<feature type="binding site" evidence="1">
    <location>
        <position position="75"/>
    </location>
    <ligand>
        <name>Zn(2+)</name>
        <dbReference type="ChEBI" id="CHEBI:29105"/>
        <label>1</label>
    </ligand>
</feature>
<feature type="binding site" evidence="1">
    <location>
        <position position="78"/>
    </location>
    <ligand>
        <name>Zn(2+)</name>
        <dbReference type="ChEBI" id="CHEBI:29105"/>
        <label>1</label>
    </ligand>
</feature>
<feature type="binding site" evidence="1">
    <location>
        <position position="535"/>
    </location>
    <ligand>
        <name>Mg(2+)</name>
        <dbReference type="ChEBI" id="CHEBI:18420"/>
    </ligand>
</feature>
<feature type="binding site" evidence="1">
    <location>
        <position position="537"/>
    </location>
    <ligand>
        <name>Mg(2+)</name>
        <dbReference type="ChEBI" id="CHEBI:18420"/>
    </ligand>
</feature>
<feature type="binding site" evidence="1">
    <location>
        <position position="539"/>
    </location>
    <ligand>
        <name>Mg(2+)</name>
        <dbReference type="ChEBI" id="CHEBI:18420"/>
    </ligand>
</feature>
<feature type="binding site" evidence="1">
    <location>
        <position position="891"/>
    </location>
    <ligand>
        <name>Zn(2+)</name>
        <dbReference type="ChEBI" id="CHEBI:29105"/>
        <label>2</label>
    </ligand>
</feature>
<feature type="binding site" evidence="1">
    <location>
        <position position="968"/>
    </location>
    <ligand>
        <name>Zn(2+)</name>
        <dbReference type="ChEBI" id="CHEBI:29105"/>
        <label>2</label>
    </ligand>
</feature>
<feature type="binding site" evidence="1">
    <location>
        <position position="975"/>
    </location>
    <ligand>
        <name>Zn(2+)</name>
        <dbReference type="ChEBI" id="CHEBI:29105"/>
        <label>2</label>
    </ligand>
</feature>
<feature type="binding site" evidence="1">
    <location>
        <position position="978"/>
    </location>
    <ligand>
        <name>Zn(2+)</name>
        <dbReference type="ChEBI" id="CHEBI:29105"/>
        <label>2</label>
    </ligand>
</feature>
<feature type="helix" evidence="17">
    <location>
        <begin position="4"/>
        <end position="6"/>
    </location>
</feature>
<feature type="strand" evidence="14">
    <location>
        <begin position="9"/>
        <end position="11"/>
    </location>
</feature>
<feature type="helix" evidence="14">
    <location>
        <begin position="17"/>
        <end position="23"/>
    </location>
</feature>
<feature type="strand" evidence="14">
    <location>
        <begin position="24"/>
        <end position="27"/>
    </location>
</feature>
<feature type="turn" evidence="14">
    <location>
        <begin position="36"/>
        <end position="38"/>
    </location>
</feature>
<feature type="strand" evidence="16">
    <location>
        <begin position="43"/>
        <end position="47"/>
    </location>
</feature>
<feature type="helix" evidence="14">
    <location>
        <begin position="49"/>
        <end position="52"/>
    </location>
</feature>
<feature type="strand" evidence="14">
    <location>
        <begin position="61"/>
        <end position="64"/>
    </location>
</feature>
<feature type="strand" evidence="14">
    <location>
        <begin position="67"/>
        <end position="70"/>
    </location>
</feature>
<feature type="turn" evidence="14">
    <location>
        <begin position="76"/>
        <end position="78"/>
    </location>
</feature>
<feature type="helix" evidence="14">
    <location>
        <begin position="85"/>
        <end position="89"/>
    </location>
</feature>
<feature type="strand" evidence="14">
    <location>
        <begin position="92"/>
        <end position="102"/>
    </location>
</feature>
<feature type="turn" evidence="14">
    <location>
        <begin position="104"/>
        <end position="108"/>
    </location>
</feature>
<feature type="strand" evidence="14">
    <location>
        <begin position="109"/>
        <end position="111"/>
    </location>
</feature>
<feature type="helix" evidence="14">
    <location>
        <begin position="113"/>
        <end position="118"/>
    </location>
</feature>
<feature type="helix" evidence="14">
    <location>
        <begin position="122"/>
        <end position="129"/>
    </location>
</feature>
<feature type="strand" evidence="4">
    <location>
        <begin position="134"/>
        <end position="139"/>
    </location>
</feature>
<feature type="helix" evidence="4">
    <location>
        <begin position="141"/>
        <end position="186"/>
    </location>
</feature>
<feature type="strand" evidence="18">
    <location>
        <begin position="187"/>
        <end position="189"/>
    </location>
</feature>
<feature type="helix" evidence="4">
    <location>
        <begin position="191"/>
        <end position="227"/>
    </location>
</feature>
<feature type="strand" evidence="13">
    <location>
        <begin position="231"/>
        <end position="235"/>
    </location>
</feature>
<feature type="helix" evidence="4">
    <location>
        <begin position="238"/>
        <end position="248"/>
    </location>
</feature>
<feature type="helix" evidence="4">
    <location>
        <begin position="249"/>
        <end position="251"/>
    </location>
</feature>
<feature type="strand" evidence="4">
    <location>
        <begin position="252"/>
        <end position="255"/>
    </location>
</feature>
<feature type="helix" evidence="14">
    <location>
        <begin position="258"/>
        <end position="266"/>
    </location>
</feature>
<feature type="helix" evidence="14">
    <location>
        <begin position="270"/>
        <end position="283"/>
    </location>
</feature>
<feature type="helix" evidence="14">
    <location>
        <begin position="287"/>
        <end position="304"/>
    </location>
</feature>
<feature type="helix" evidence="14">
    <location>
        <begin position="309"/>
        <end position="312"/>
    </location>
</feature>
<feature type="strand" evidence="14">
    <location>
        <begin position="313"/>
        <end position="319"/>
    </location>
</feature>
<feature type="helix" evidence="14">
    <location>
        <begin position="322"/>
        <end position="324"/>
    </location>
</feature>
<feature type="strand" evidence="6">
    <location>
        <begin position="327"/>
        <end position="329"/>
    </location>
</feature>
<feature type="turn" evidence="16">
    <location>
        <begin position="331"/>
        <end position="333"/>
    </location>
</feature>
<feature type="strand" evidence="14">
    <location>
        <begin position="335"/>
        <end position="337"/>
    </location>
</feature>
<feature type="helix" evidence="14">
    <location>
        <begin position="340"/>
        <end position="360"/>
    </location>
</feature>
<feature type="helix" evidence="14">
    <location>
        <begin position="364"/>
        <end position="382"/>
    </location>
</feature>
<feature type="strand" evidence="14">
    <location>
        <begin position="386"/>
        <end position="389"/>
    </location>
</feature>
<feature type="turn" evidence="6">
    <location>
        <begin position="394"/>
        <end position="396"/>
    </location>
</feature>
<feature type="turn" evidence="14">
    <location>
        <begin position="404"/>
        <end position="406"/>
    </location>
</feature>
<feature type="strand" evidence="6">
    <location>
        <begin position="407"/>
        <end position="411"/>
    </location>
</feature>
<feature type="helix" evidence="14">
    <location>
        <begin position="412"/>
        <end position="415"/>
    </location>
</feature>
<feature type="strand" evidence="14">
    <location>
        <begin position="418"/>
        <end position="432"/>
    </location>
</feature>
<feature type="strand" evidence="14">
    <location>
        <begin position="440"/>
        <end position="444"/>
    </location>
</feature>
<feature type="helix" evidence="14">
    <location>
        <begin position="445"/>
        <end position="451"/>
    </location>
</feature>
<feature type="helix" evidence="14">
    <location>
        <begin position="453"/>
        <end position="462"/>
    </location>
</feature>
<feature type="strand" evidence="14">
    <location>
        <begin position="465"/>
        <end position="468"/>
    </location>
</feature>
<feature type="helix" evidence="14">
    <location>
        <begin position="469"/>
        <end position="478"/>
    </location>
</feature>
<feature type="helix" evidence="14">
    <location>
        <begin position="482"/>
        <end position="491"/>
    </location>
</feature>
<feature type="strand" evidence="14">
    <location>
        <begin position="496"/>
        <end position="499"/>
    </location>
</feature>
<feature type="helix" evidence="14">
    <location>
        <begin position="506"/>
        <end position="508"/>
    </location>
</feature>
<feature type="strand" evidence="14">
    <location>
        <begin position="509"/>
        <end position="524"/>
    </location>
</feature>
<feature type="helix" evidence="5">
    <location>
        <begin position="526"/>
        <end position="528"/>
    </location>
</feature>
<feature type="helix" evidence="14">
    <location>
        <begin position="529"/>
        <end position="532"/>
    </location>
</feature>
<feature type="strand" evidence="14">
    <location>
        <begin position="536"/>
        <end position="538"/>
    </location>
</feature>
<feature type="strand" evidence="14">
    <location>
        <begin position="540"/>
        <end position="544"/>
    </location>
</feature>
<feature type="helix" evidence="14">
    <location>
        <begin position="549"/>
        <end position="557"/>
    </location>
</feature>
<feature type="helix" evidence="14">
    <location>
        <begin position="561"/>
        <end position="563"/>
    </location>
</feature>
<feature type="turn" evidence="14">
    <location>
        <begin position="568"/>
        <end position="570"/>
    </location>
</feature>
<feature type="strand" evidence="14">
    <location>
        <begin position="573"/>
        <end position="576"/>
    </location>
</feature>
<feature type="helix" evidence="14">
    <location>
        <begin position="580"/>
        <end position="589"/>
    </location>
</feature>
<feature type="strand" evidence="14">
    <location>
        <begin position="604"/>
        <end position="606"/>
    </location>
</feature>
<feature type="strand" evidence="6">
    <location>
        <begin position="609"/>
        <end position="614"/>
    </location>
</feature>
<feature type="helix" evidence="14">
    <location>
        <begin position="615"/>
        <end position="623"/>
    </location>
</feature>
<feature type="turn" evidence="14">
    <location>
        <begin position="624"/>
        <end position="626"/>
    </location>
</feature>
<feature type="strand" evidence="14">
    <location>
        <begin position="631"/>
        <end position="641"/>
    </location>
</feature>
<feature type="helix" evidence="14">
    <location>
        <begin position="644"/>
        <end position="650"/>
    </location>
</feature>
<feature type="turn" evidence="12">
    <location>
        <begin position="651"/>
        <end position="653"/>
    </location>
</feature>
<feature type="turn" evidence="16">
    <location>
        <begin position="657"/>
        <end position="659"/>
    </location>
</feature>
<feature type="strand" evidence="14">
    <location>
        <begin position="662"/>
        <end position="667"/>
    </location>
</feature>
<feature type="helix" evidence="14">
    <location>
        <begin position="668"/>
        <end position="674"/>
    </location>
</feature>
<feature type="strand" evidence="7">
    <location>
        <begin position="679"/>
        <end position="681"/>
    </location>
</feature>
<feature type="helix" evidence="14">
    <location>
        <begin position="690"/>
        <end position="703"/>
    </location>
</feature>
<feature type="helix" evidence="14">
    <location>
        <begin position="706"/>
        <end position="725"/>
    </location>
</feature>
<feature type="turn" evidence="15">
    <location>
        <begin position="726"/>
        <end position="728"/>
    </location>
</feature>
<feature type="turn" evidence="6">
    <location>
        <begin position="733"/>
        <end position="735"/>
    </location>
</feature>
<feature type="helix" evidence="14">
    <location>
        <begin position="742"/>
        <end position="761"/>
    </location>
</feature>
<feature type="helix" evidence="14">
    <location>
        <begin position="767"/>
        <end position="792"/>
    </location>
</feature>
<feature type="strand" evidence="8">
    <location>
        <begin position="795"/>
        <end position="797"/>
    </location>
</feature>
<feature type="helix" evidence="14">
    <location>
        <begin position="798"/>
        <end position="804"/>
    </location>
</feature>
<feature type="strand" evidence="7">
    <location>
        <begin position="806"/>
        <end position="808"/>
    </location>
</feature>
<feature type="helix" evidence="14">
    <location>
        <begin position="811"/>
        <end position="817"/>
    </location>
</feature>
<feature type="strand" evidence="16">
    <location>
        <begin position="822"/>
        <end position="825"/>
    </location>
</feature>
<feature type="strand" evidence="14">
    <location>
        <begin position="827"/>
        <end position="829"/>
    </location>
</feature>
<feature type="strand" evidence="16">
    <location>
        <begin position="831"/>
        <end position="836"/>
    </location>
</feature>
<feature type="turn" evidence="14">
    <location>
        <begin position="840"/>
        <end position="842"/>
    </location>
</feature>
<feature type="helix" evidence="14">
    <location>
        <begin position="846"/>
        <end position="880"/>
    </location>
</feature>
<feature type="helix" evidence="12">
    <location>
        <begin position="881"/>
        <end position="883"/>
    </location>
</feature>
<feature type="strand" evidence="14">
    <location>
        <begin position="886"/>
        <end position="889"/>
    </location>
</feature>
<feature type="strand" evidence="14">
    <location>
        <begin position="897"/>
        <end position="899"/>
    </location>
</feature>
<feature type="strand" evidence="6">
    <location>
        <begin position="902"/>
        <end position="904"/>
    </location>
</feature>
<feature type="strand" evidence="14">
    <location>
        <begin position="906"/>
        <end position="908"/>
    </location>
</feature>
<feature type="strand" evidence="6">
    <location>
        <begin position="910"/>
        <end position="912"/>
    </location>
</feature>
<feature type="turn" evidence="14">
    <location>
        <begin position="917"/>
        <end position="920"/>
    </location>
</feature>
<feature type="strand" evidence="6">
    <location>
        <begin position="924"/>
        <end position="927"/>
    </location>
</feature>
<feature type="strand" evidence="14">
    <location>
        <begin position="929"/>
        <end position="931"/>
    </location>
</feature>
<feature type="strand" evidence="11">
    <location>
        <begin position="932"/>
        <end position="934"/>
    </location>
</feature>
<feature type="strand" evidence="14">
    <location>
        <begin position="935"/>
        <end position="938"/>
    </location>
</feature>
<feature type="helix" evidence="14">
    <location>
        <begin position="946"/>
        <end position="955"/>
    </location>
</feature>
<feature type="strand" evidence="14">
    <location>
        <begin position="960"/>
        <end position="962"/>
    </location>
</feature>
<feature type="helix" evidence="14">
    <location>
        <begin position="965"/>
        <end position="967"/>
    </location>
</feature>
<feature type="strand" evidence="14">
    <location>
        <begin position="971"/>
        <end position="975"/>
    </location>
</feature>
<feature type="helix" evidence="14">
    <location>
        <begin position="976"/>
        <end position="979"/>
    </location>
</feature>
<feature type="turn" evidence="14">
    <location>
        <begin position="983"/>
        <end position="985"/>
    </location>
</feature>
<feature type="strand" evidence="14">
    <location>
        <begin position="986"/>
        <end position="988"/>
    </location>
</feature>
<feature type="helix" evidence="14">
    <location>
        <begin position="995"/>
        <end position="1004"/>
    </location>
</feature>
<feature type="helix" evidence="6">
    <location>
        <begin position="1005"/>
        <end position="1009"/>
    </location>
</feature>
<feature type="turn" evidence="19">
    <location>
        <begin position="1012"/>
        <end position="1016"/>
    </location>
</feature>
<feature type="helix" evidence="14">
    <location>
        <begin position="1028"/>
        <end position="1034"/>
    </location>
</feature>
<feature type="turn" evidence="14">
    <location>
        <begin position="1035"/>
        <end position="1037"/>
    </location>
</feature>
<feature type="strand" evidence="6">
    <location>
        <begin position="1041"/>
        <end position="1044"/>
    </location>
</feature>
<feature type="strand" evidence="14">
    <location>
        <begin position="1048"/>
        <end position="1057"/>
    </location>
</feature>
<feature type="strand" evidence="14">
    <location>
        <begin position="1059"/>
        <end position="1068"/>
    </location>
</feature>
<feature type="strand" evidence="18">
    <location>
        <begin position="1069"/>
        <end position="1072"/>
    </location>
</feature>
<feature type="strand" evidence="14">
    <location>
        <begin position="1075"/>
        <end position="1077"/>
    </location>
</feature>
<feature type="strand" evidence="14">
    <location>
        <begin position="1082"/>
        <end position="1084"/>
    </location>
</feature>
<feature type="strand" evidence="6">
    <location>
        <begin position="1088"/>
        <end position="1090"/>
    </location>
</feature>
<feature type="strand" evidence="9">
    <location>
        <begin position="1092"/>
        <end position="1094"/>
    </location>
</feature>
<feature type="strand" evidence="6">
    <location>
        <begin position="1096"/>
        <end position="1098"/>
    </location>
</feature>
<feature type="strand" evidence="10">
    <location>
        <begin position="1101"/>
        <end position="1105"/>
    </location>
</feature>
<feature type="strand" evidence="14">
    <location>
        <begin position="1112"/>
        <end position="1115"/>
    </location>
</feature>
<feature type="helix" evidence="14">
    <location>
        <begin position="1118"/>
        <end position="1124"/>
    </location>
</feature>
<feature type="helix" evidence="14">
    <location>
        <begin position="1127"/>
        <end position="1143"/>
    </location>
</feature>
<feature type="turn" evidence="14">
    <location>
        <begin position="1144"/>
        <end position="1146"/>
    </location>
</feature>
<feature type="helix" evidence="14">
    <location>
        <begin position="1151"/>
        <end position="1153"/>
    </location>
</feature>
<feature type="helix" evidence="14">
    <location>
        <begin position="1155"/>
        <end position="1159"/>
    </location>
</feature>
<feature type="strand" evidence="14">
    <location>
        <begin position="1162"/>
        <end position="1169"/>
    </location>
</feature>
<feature type="strand" evidence="9">
    <location>
        <begin position="1171"/>
        <end position="1174"/>
    </location>
</feature>
<feature type="strand" evidence="14">
    <location>
        <begin position="1180"/>
        <end position="1182"/>
    </location>
</feature>
<feature type="helix" evidence="14">
    <location>
        <begin position="1183"/>
        <end position="1186"/>
    </location>
</feature>
<feature type="turn" evidence="14">
    <location>
        <begin position="1187"/>
        <end position="1193"/>
    </location>
</feature>
<feature type="strand" evidence="14">
    <location>
        <begin position="1194"/>
        <end position="1198"/>
    </location>
</feature>
<feature type="strand" evidence="14">
    <location>
        <begin position="1202"/>
        <end position="1205"/>
    </location>
</feature>
<feature type="helix" evidence="14">
    <location>
        <begin position="1212"/>
        <end position="1215"/>
    </location>
</feature>
<feature type="strand" evidence="14">
    <location>
        <begin position="1216"/>
        <end position="1218"/>
    </location>
</feature>
<feature type="helix" evidence="14">
    <location>
        <begin position="1220"/>
        <end position="1223"/>
    </location>
</feature>
<feature type="turn" evidence="14">
    <location>
        <begin position="1224"/>
        <end position="1226"/>
    </location>
</feature>
<feature type="helix" evidence="14">
    <location>
        <begin position="1229"/>
        <end position="1236"/>
    </location>
</feature>
<feature type="turn" evidence="14">
    <location>
        <begin position="1237"/>
        <end position="1240"/>
    </location>
</feature>
<feature type="strand" evidence="8">
    <location>
        <begin position="1242"/>
        <end position="1244"/>
    </location>
</feature>
<feature type="strand" evidence="14">
    <location>
        <begin position="1247"/>
        <end position="1249"/>
    </location>
</feature>
<feature type="helix" evidence="14">
    <location>
        <begin position="1250"/>
        <end position="1254"/>
    </location>
</feature>
<feature type="helix" evidence="14">
    <location>
        <begin position="1261"/>
        <end position="1263"/>
    </location>
</feature>
<feature type="helix" evidence="14">
    <location>
        <begin position="1265"/>
        <end position="1268"/>
    </location>
</feature>
<feature type="strand" evidence="14">
    <location>
        <begin position="1271"/>
        <end position="1274"/>
    </location>
</feature>
<feature type="helix" evidence="14">
    <location>
        <begin position="1276"/>
        <end position="1280"/>
    </location>
</feature>
<reference key="1">
    <citation type="journal article" date="1998" name="Nature">
        <title>Deciphering the biology of Mycobacterium tuberculosis from the complete genome sequence.</title>
        <authorList>
            <person name="Cole S.T."/>
            <person name="Brosch R."/>
            <person name="Parkhill J."/>
            <person name="Garnier T."/>
            <person name="Churcher C.M."/>
            <person name="Harris D.E."/>
            <person name="Gordon S.V."/>
            <person name="Eiglmeier K."/>
            <person name="Gas S."/>
            <person name="Barry C.E. III"/>
            <person name="Tekaia F."/>
            <person name="Badcock K."/>
            <person name="Basham D."/>
            <person name="Brown D."/>
            <person name="Chillingworth T."/>
            <person name="Connor R."/>
            <person name="Davies R.M."/>
            <person name="Devlin K."/>
            <person name="Feltwell T."/>
            <person name="Gentles S."/>
            <person name="Hamlin N."/>
            <person name="Holroyd S."/>
            <person name="Hornsby T."/>
            <person name="Jagels K."/>
            <person name="Krogh A."/>
            <person name="McLean J."/>
            <person name="Moule S."/>
            <person name="Murphy L.D."/>
            <person name="Oliver S."/>
            <person name="Osborne J."/>
            <person name="Quail M.A."/>
            <person name="Rajandream M.A."/>
            <person name="Rogers J."/>
            <person name="Rutter S."/>
            <person name="Seeger K."/>
            <person name="Skelton S."/>
            <person name="Squares S."/>
            <person name="Squares R."/>
            <person name="Sulston J.E."/>
            <person name="Taylor K."/>
            <person name="Whitehead S."/>
            <person name="Barrell B.G."/>
        </authorList>
    </citation>
    <scope>NUCLEOTIDE SEQUENCE [LARGE SCALE GENOMIC DNA]</scope>
    <source>
        <strain>ATCC 25618 / H37Rv</strain>
    </source>
</reference>
<reference key="2">
    <citation type="journal article" date="1994" name="Antimicrob. Agents Chemother.">
        <title>The rpoB gene of Mycobacterium tuberculosis.</title>
        <authorList>
            <person name="Miller L.P."/>
            <person name="Crawford J.T."/>
            <person name="Shinnick T.M."/>
        </authorList>
    </citation>
    <scope>NUCLEOTIDE SEQUENCE [GENOMIC DNA] OF 1-148</scope>
    <source>
        <strain>ATCC 25618 / H37Rv</strain>
    </source>
</reference>
<reference key="3">
    <citation type="journal article" date="2002" name="Mol. Microbiol.">
        <title>Evaluation of a nutrient starvation model of Mycobacterium tuberculosis persistence by gene and protein expression profiling.</title>
        <authorList>
            <person name="Betts J.C."/>
            <person name="Lukey P.T."/>
            <person name="Robb L.C."/>
            <person name="McAdam R.A."/>
            <person name="Duncan K."/>
        </authorList>
    </citation>
    <scope>INDUCTION FOLLOWING STARVATION</scope>
    <source>
        <strain>ATCC 25618 / H37Rv / NCTC 7416</strain>
    </source>
</reference>
<reference key="4">
    <citation type="journal article" date="2011" name="Mol. Cell. Proteomics">
        <title>Proteogenomic analysis of Mycobacterium tuberculosis by high resolution mass spectrometry.</title>
        <authorList>
            <person name="Kelkar D.S."/>
            <person name="Kumar D."/>
            <person name="Kumar P."/>
            <person name="Balakrishnan L."/>
            <person name="Muthusamy B."/>
            <person name="Yadav A.K."/>
            <person name="Shrivastava P."/>
            <person name="Marimuthu A."/>
            <person name="Anand S."/>
            <person name="Sundaram H."/>
            <person name="Kingsbury R."/>
            <person name="Harsha H.C."/>
            <person name="Nair B."/>
            <person name="Prasad T.S."/>
            <person name="Chauhan D.S."/>
            <person name="Katoch K."/>
            <person name="Katoch V.M."/>
            <person name="Kumar P."/>
            <person name="Chaerkady R."/>
            <person name="Ramachandran S."/>
            <person name="Dash D."/>
            <person name="Pandey A."/>
        </authorList>
    </citation>
    <scope>IDENTIFICATION BY MASS SPECTROMETRY [LARGE SCALE ANALYSIS]</scope>
    <source>
        <strain>ATCC 25618 / H37Rv</strain>
    </source>
</reference>
<reference key="5">
    <citation type="journal article" date="2012" name="Nucleic Acids Res.">
        <title>Mycobacterium tuberculosis RbpA protein is a new type of transcriptional activator that stabilizes the sigma A-containing RNA polymerase holoenzyme.</title>
        <authorList>
            <person name="Hu Y."/>
            <person name="Morichaud Z."/>
            <person name="Chen S."/>
            <person name="Leonetti J.P."/>
            <person name="Brodolin K."/>
        </authorList>
    </citation>
    <scope>FUNCTION</scope>
    <scope>SUBUNIT</scope>
    <source>
        <strain>ATCC 25618 / H37Rv</strain>
    </source>
</reference>
<sequence length="1316" mass="146769">MLDVNFFDELRIGLATAEDIRQWSYGEVKKPETINYRTLKPEKDGLFCEKIFGPTRDWECYCGKYKRVRFKGIICERCGVEVTRAKVRRERMGHIELAAPVTHIWYFKGVPSRLGYLLDLAPKDLEKIIYFAAYVITSVDEEMRHNELSTLEAEMAVERKAVEDQRDGELEARAQKLEADLAELEAEGAKADARRKVRDGGEREMRQIRDRAQRELDRLEDIWSTFTKLAPKQLIVDENLYRELVDRYGEYFTGAMGAESIQKLIENFDIDAEAESLRDVIRNGKGQKKLRALKRLKVVAAFQQSGNSPMGMVLDAVPVIPPELRPMVQLDGGRFATSDLNDLYRRVINRNNRLKRLIDLGAPEIIVNNEKRMLQESVDALFDNGRRGRPVTGPGNRPLKSLSDLLKGKQGRFRQNLLGKRVDYSGRSVIVVGPQLKLHQCGLPKLMALELFKPFVMKRLVDLNHAQNIKSAKRMVERQRPQVWDVLEEVIAEHPVLLNRAPTLHRLGIQAFEPMLVEGKAIQLHPLVCEAFNADFDGDQMAVHLPLSAEAQAEARILMLSSNNILSPASGRPLAMPRLDMVTGLYYLTTEVPGDTGEYQPASGDHPETGVYSSPAEAIMAADRGVLSVRAKIKVRLTQLRPPVEIEAELFGHSGWQPGDAWMAETTLGRVMFNELLPLGYPFVNKQMHKKVQAAIINDLAERYPMIVVAQTVDKLKDAGFYWATRSGVTVSMADVLVPPRKKEILDHYEERADKVEKQFQRGALNHDERNEALVEIWKEATDEVGQALREHYPDDNPIITIVDSGATGNFTQTRTLAGMKGLVTNPKGEFIPRPVKSSFREGLTVLEYFINTHGARKGLADTALRTADSGYLTRRLVDVSQDVIVREHDCQTERGIVVELAERAPDGTLIRDPYIETSAYARTLGTDAVDEAGNVIVERGQDLGDPEIDALLAAGITQVKVRSVLTCATSTGVCATCYGRSMATGKLVDIGEAVGIVAAQSIGEPGTQLTMRTFHQGGVGEDITGGLPRVQELFEARVPRGKAPIADVTGRVRLEDGERFYKITIVPDDGGEEVVYDKISKRQRLRVFKHEDGSERVLSDGDHVEVGQQLMEGSADPHEVLRVQGPREVQIHLVREVQEVYRAQGVSIHDKHIEVIVRQMLRRVTIIDSGSTEFLPGSLIDRAEFEAENRRVVAEGGEPAAGRPVLMGITKASLATDSWLSAASFQETTRVLTDAAINCRSDKLNGLKENVIIGKLIPAGTGINRYRNIAVQPTEEARAAAYTIPSYEDQYYSPDFGAATGAAVPLDDYGYSDYR</sequence>
<gene>
    <name evidence="1" type="primary">rpoC</name>
    <name type="ordered locus">Rv0668</name>
    <name type="ORF">MTCI376.07c</name>
</gene>
<protein>
    <recommendedName>
        <fullName evidence="1">DNA-directed RNA polymerase subunit beta'</fullName>
        <shortName evidence="1">RNAP subunit beta'</shortName>
        <ecNumber evidence="1">2.7.7.6</ecNumber>
    </recommendedName>
    <alternativeName>
        <fullName evidence="1">RNA polymerase subunit beta'</fullName>
    </alternativeName>
    <alternativeName>
        <fullName evidence="1">Transcriptase subunit beta'</fullName>
    </alternativeName>
</protein>
<keyword id="KW-0002">3D-structure</keyword>
<keyword id="KW-0240">DNA-directed RNA polymerase</keyword>
<keyword id="KW-0460">Magnesium</keyword>
<keyword id="KW-0479">Metal-binding</keyword>
<keyword id="KW-0548">Nucleotidyltransferase</keyword>
<keyword id="KW-1185">Reference proteome</keyword>
<keyword id="KW-0804">Transcription</keyword>
<keyword id="KW-0808">Transferase</keyword>
<keyword id="KW-0862">Zinc</keyword>